<dbReference type="EC" id="2.4.2.18" evidence="1"/>
<dbReference type="EMBL" id="CT573213">
    <property type="protein sequence ID" value="CAJ63760.1"/>
    <property type="molecule type" value="Genomic_DNA"/>
</dbReference>
<dbReference type="SMR" id="Q0RFI3"/>
<dbReference type="STRING" id="326424.FRAAL5120"/>
<dbReference type="KEGG" id="fal:FRAAL5120"/>
<dbReference type="eggNOG" id="COG0547">
    <property type="taxonomic scope" value="Bacteria"/>
</dbReference>
<dbReference type="HOGENOM" id="CLU_034315_4_1_11"/>
<dbReference type="OrthoDB" id="9806430at2"/>
<dbReference type="UniPathway" id="UPA00035">
    <property type="reaction ID" value="UER00041"/>
</dbReference>
<dbReference type="Proteomes" id="UP000000657">
    <property type="component" value="Chromosome"/>
</dbReference>
<dbReference type="GO" id="GO:0005829">
    <property type="term" value="C:cytosol"/>
    <property type="evidence" value="ECO:0007669"/>
    <property type="project" value="TreeGrafter"/>
</dbReference>
<dbReference type="GO" id="GO:0004048">
    <property type="term" value="F:anthranilate phosphoribosyltransferase activity"/>
    <property type="evidence" value="ECO:0007669"/>
    <property type="project" value="UniProtKB-UniRule"/>
</dbReference>
<dbReference type="GO" id="GO:0000287">
    <property type="term" value="F:magnesium ion binding"/>
    <property type="evidence" value="ECO:0007669"/>
    <property type="project" value="UniProtKB-UniRule"/>
</dbReference>
<dbReference type="GO" id="GO:0000162">
    <property type="term" value="P:L-tryptophan biosynthetic process"/>
    <property type="evidence" value="ECO:0007669"/>
    <property type="project" value="UniProtKB-UniRule"/>
</dbReference>
<dbReference type="Gene3D" id="3.40.1030.10">
    <property type="entry name" value="Nucleoside phosphorylase/phosphoribosyltransferase catalytic domain"/>
    <property type="match status" value="1"/>
</dbReference>
<dbReference type="Gene3D" id="1.20.970.10">
    <property type="entry name" value="Transferase, Pyrimidine Nucleoside Phosphorylase, Chain C"/>
    <property type="match status" value="1"/>
</dbReference>
<dbReference type="HAMAP" id="MF_00211">
    <property type="entry name" value="TrpD"/>
    <property type="match status" value="1"/>
</dbReference>
<dbReference type="InterPro" id="IPR005940">
    <property type="entry name" value="Anthranilate_Pribosyl_Tfrase"/>
</dbReference>
<dbReference type="InterPro" id="IPR000312">
    <property type="entry name" value="Glycosyl_Trfase_fam3"/>
</dbReference>
<dbReference type="InterPro" id="IPR017459">
    <property type="entry name" value="Glycosyl_Trfase_fam3_N_dom"/>
</dbReference>
<dbReference type="InterPro" id="IPR036320">
    <property type="entry name" value="Glycosyl_Trfase_fam3_N_dom_sf"/>
</dbReference>
<dbReference type="InterPro" id="IPR035902">
    <property type="entry name" value="Nuc_phospho_transferase"/>
</dbReference>
<dbReference type="NCBIfam" id="TIGR01245">
    <property type="entry name" value="trpD"/>
    <property type="match status" value="1"/>
</dbReference>
<dbReference type="PANTHER" id="PTHR43285">
    <property type="entry name" value="ANTHRANILATE PHOSPHORIBOSYLTRANSFERASE"/>
    <property type="match status" value="1"/>
</dbReference>
<dbReference type="PANTHER" id="PTHR43285:SF2">
    <property type="entry name" value="ANTHRANILATE PHOSPHORIBOSYLTRANSFERASE"/>
    <property type="match status" value="1"/>
</dbReference>
<dbReference type="Pfam" id="PF02885">
    <property type="entry name" value="Glycos_trans_3N"/>
    <property type="match status" value="1"/>
</dbReference>
<dbReference type="Pfam" id="PF00591">
    <property type="entry name" value="Glycos_transf_3"/>
    <property type="match status" value="1"/>
</dbReference>
<dbReference type="SUPFAM" id="SSF52418">
    <property type="entry name" value="Nucleoside phosphorylase/phosphoribosyltransferase catalytic domain"/>
    <property type="match status" value="1"/>
</dbReference>
<dbReference type="SUPFAM" id="SSF47648">
    <property type="entry name" value="Nucleoside phosphorylase/phosphoribosyltransferase N-terminal domain"/>
    <property type="match status" value="1"/>
</dbReference>
<feature type="chain" id="PRO_0000325428" description="Anthranilate phosphoribosyltransferase">
    <location>
        <begin position="1"/>
        <end position="369"/>
    </location>
</feature>
<feature type="binding site" evidence="1">
    <location>
        <position position="85"/>
    </location>
    <ligand>
        <name>5-phospho-alpha-D-ribose 1-diphosphate</name>
        <dbReference type="ChEBI" id="CHEBI:58017"/>
    </ligand>
</feature>
<feature type="binding site" evidence="1">
    <location>
        <position position="85"/>
    </location>
    <ligand>
        <name>anthranilate</name>
        <dbReference type="ChEBI" id="CHEBI:16567"/>
        <label>1</label>
    </ligand>
</feature>
<feature type="binding site" evidence="1">
    <location>
        <begin position="88"/>
        <end position="89"/>
    </location>
    <ligand>
        <name>5-phospho-alpha-D-ribose 1-diphosphate</name>
        <dbReference type="ChEBI" id="CHEBI:58017"/>
    </ligand>
</feature>
<feature type="binding site" evidence="1">
    <location>
        <position position="93"/>
    </location>
    <ligand>
        <name>5-phospho-alpha-D-ribose 1-diphosphate</name>
        <dbReference type="ChEBI" id="CHEBI:58017"/>
    </ligand>
</feature>
<feature type="binding site" evidence="1">
    <location>
        <begin position="95"/>
        <end position="98"/>
    </location>
    <ligand>
        <name>5-phospho-alpha-D-ribose 1-diphosphate</name>
        <dbReference type="ChEBI" id="CHEBI:58017"/>
    </ligand>
</feature>
<feature type="binding site" evidence="1">
    <location>
        <position position="97"/>
    </location>
    <ligand>
        <name>Mg(2+)</name>
        <dbReference type="ChEBI" id="CHEBI:18420"/>
        <label>1</label>
    </ligand>
</feature>
<feature type="binding site" evidence="1">
    <location>
        <begin position="113"/>
        <end position="121"/>
    </location>
    <ligand>
        <name>5-phospho-alpha-D-ribose 1-diphosphate</name>
        <dbReference type="ChEBI" id="CHEBI:58017"/>
    </ligand>
</feature>
<feature type="binding site" evidence="1">
    <location>
        <position position="116"/>
    </location>
    <ligand>
        <name>anthranilate</name>
        <dbReference type="ChEBI" id="CHEBI:16567"/>
        <label>1</label>
    </ligand>
</feature>
<feature type="binding site" evidence="1">
    <location>
        <position position="125"/>
    </location>
    <ligand>
        <name>5-phospho-alpha-D-ribose 1-diphosphate</name>
        <dbReference type="ChEBI" id="CHEBI:58017"/>
    </ligand>
</feature>
<feature type="binding site" evidence="1">
    <location>
        <position position="171"/>
    </location>
    <ligand>
        <name>anthranilate</name>
        <dbReference type="ChEBI" id="CHEBI:16567"/>
        <label>2</label>
    </ligand>
</feature>
<feature type="binding site" evidence="1">
    <location>
        <position position="229"/>
    </location>
    <ligand>
        <name>Mg(2+)</name>
        <dbReference type="ChEBI" id="CHEBI:18420"/>
        <label>2</label>
    </ligand>
</feature>
<feature type="binding site" evidence="1">
    <location>
        <position position="230"/>
    </location>
    <ligand>
        <name>Mg(2+)</name>
        <dbReference type="ChEBI" id="CHEBI:18420"/>
        <label>1</label>
    </ligand>
</feature>
<feature type="binding site" evidence="1">
    <location>
        <position position="230"/>
    </location>
    <ligand>
        <name>Mg(2+)</name>
        <dbReference type="ChEBI" id="CHEBI:18420"/>
        <label>2</label>
    </ligand>
</feature>
<sequence length="369" mass="36910">MASWPELIGALLARESLDSARTAWAMDQIMAGAATPAQIAGFAVALRAKGETPAEIGGLIAAMRAHAAPLRIPDEIRARAVDTCGTGGDRSNTVNLSTMAALVVAGAGVPVIKHGNRAASSACGSADLLAELGVAIDLPPAGVEACLRAAGIAFCFARIFHPAMRHVGGPRAEIGVPTAFNILGPLTNPAEPGAQAVGVADARLAPVVAQVLADRGTRALVFRGDDGLDELTPTTTSTIWVIPGGQPSAAGEAAGQTAAPPRREQFDPRDVGIHVPDIAVLRGADAPHNAAVTRALLAGEPGPVRDTVLLAAAASLVAAAGPTDAAITEQIAAALPRAAHAIDSGAAAAVLDRWTDASQAAAAAAAIAR</sequence>
<organism>
    <name type="scientific">Frankia alni (strain DSM 45986 / CECT 9034 / ACN14a)</name>
    <dbReference type="NCBI Taxonomy" id="326424"/>
    <lineage>
        <taxon>Bacteria</taxon>
        <taxon>Bacillati</taxon>
        <taxon>Actinomycetota</taxon>
        <taxon>Actinomycetes</taxon>
        <taxon>Frankiales</taxon>
        <taxon>Frankiaceae</taxon>
        <taxon>Frankia</taxon>
    </lineage>
</organism>
<gene>
    <name evidence="1" type="primary">trpD</name>
    <name type="ordered locus">FRAAL5120</name>
</gene>
<name>TRPD_FRAAA</name>
<comment type="function">
    <text evidence="1">Catalyzes the transfer of the phosphoribosyl group of 5-phosphorylribose-1-pyrophosphate (PRPP) to anthranilate to yield N-(5'-phosphoribosyl)-anthranilate (PRA).</text>
</comment>
<comment type="catalytic activity">
    <reaction evidence="1">
        <text>N-(5-phospho-beta-D-ribosyl)anthranilate + diphosphate = 5-phospho-alpha-D-ribose 1-diphosphate + anthranilate</text>
        <dbReference type="Rhea" id="RHEA:11768"/>
        <dbReference type="ChEBI" id="CHEBI:16567"/>
        <dbReference type="ChEBI" id="CHEBI:18277"/>
        <dbReference type="ChEBI" id="CHEBI:33019"/>
        <dbReference type="ChEBI" id="CHEBI:58017"/>
        <dbReference type="EC" id="2.4.2.18"/>
    </reaction>
</comment>
<comment type="cofactor">
    <cofactor evidence="1">
        <name>Mg(2+)</name>
        <dbReference type="ChEBI" id="CHEBI:18420"/>
    </cofactor>
    <text evidence="1">Binds 2 magnesium ions per monomer.</text>
</comment>
<comment type="pathway">
    <text evidence="1">Amino-acid biosynthesis; L-tryptophan biosynthesis; L-tryptophan from chorismate: step 2/5.</text>
</comment>
<comment type="subunit">
    <text evidence="1">Homodimer.</text>
</comment>
<comment type="similarity">
    <text evidence="1">Belongs to the anthranilate phosphoribosyltransferase family.</text>
</comment>
<evidence type="ECO:0000255" key="1">
    <source>
        <dbReference type="HAMAP-Rule" id="MF_00211"/>
    </source>
</evidence>
<reference key="1">
    <citation type="journal article" date="2007" name="Genome Res.">
        <title>Genome characteristics of facultatively symbiotic Frankia sp. strains reflect host range and host plant biogeography.</title>
        <authorList>
            <person name="Normand P."/>
            <person name="Lapierre P."/>
            <person name="Tisa L.S."/>
            <person name="Gogarten J.P."/>
            <person name="Alloisio N."/>
            <person name="Bagnarol E."/>
            <person name="Bassi C.A."/>
            <person name="Berry A.M."/>
            <person name="Bickhart D.M."/>
            <person name="Choisne N."/>
            <person name="Couloux A."/>
            <person name="Cournoyer B."/>
            <person name="Cruveiller S."/>
            <person name="Daubin V."/>
            <person name="Demange N."/>
            <person name="Francino M.P."/>
            <person name="Goltsman E."/>
            <person name="Huang Y."/>
            <person name="Kopp O.R."/>
            <person name="Labarre L."/>
            <person name="Lapidus A."/>
            <person name="Lavire C."/>
            <person name="Marechal J."/>
            <person name="Martinez M."/>
            <person name="Mastronunzio J.E."/>
            <person name="Mullin B.C."/>
            <person name="Niemann J."/>
            <person name="Pujic P."/>
            <person name="Rawnsley T."/>
            <person name="Rouy Z."/>
            <person name="Schenowitz C."/>
            <person name="Sellstedt A."/>
            <person name="Tavares F."/>
            <person name="Tomkins J.P."/>
            <person name="Vallenet D."/>
            <person name="Valverde C."/>
            <person name="Wall L.G."/>
            <person name="Wang Y."/>
            <person name="Medigue C."/>
            <person name="Benson D.R."/>
        </authorList>
    </citation>
    <scope>NUCLEOTIDE SEQUENCE [LARGE SCALE GENOMIC DNA]</scope>
    <source>
        <strain>DSM 45986 / CECT 9034 / ACN14a</strain>
    </source>
</reference>
<keyword id="KW-0028">Amino-acid biosynthesis</keyword>
<keyword id="KW-0057">Aromatic amino acid biosynthesis</keyword>
<keyword id="KW-0328">Glycosyltransferase</keyword>
<keyword id="KW-0460">Magnesium</keyword>
<keyword id="KW-0479">Metal-binding</keyword>
<keyword id="KW-1185">Reference proteome</keyword>
<keyword id="KW-0808">Transferase</keyword>
<keyword id="KW-0822">Tryptophan biosynthesis</keyword>
<protein>
    <recommendedName>
        <fullName evidence="1">Anthranilate phosphoribosyltransferase</fullName>
        <ecNumber evidence="1">2.4.2.18</ecNumber>
    </recommendedName>
</protein>
<accession>Q0RFI3</accession>
<proteinExistence type="inferred from homology"/>